<protein>
    <recommendedName>
        <fullName evidence="5">Adenylate-forming reductase stbB</fullName>
        <ecNumber evidence="4">1.2.1.-</ecNumber>
    </recommendedName>
    <alternativeName>
        <fullName evidence="5">Ilicicolin B biosynthesis cluster protein stbB</fullName>
    </alternativeName>
    <alternativeName>
        <fullName evidence="5">LL-Z1272-beta biosynthesis cluster protein stbB</fullName>
    </alternativeName>
    <alternativeName>
        <fullName evidence="5">Nonribosomal peptide synthase-like protein stbB</fullName>
        <shortName evidence="5">NRPS-like protein stbB</shortName>
    </alternativeName>
</protein>
<organism>
    <name type="scientific">Stachybotrys bisbyi</name>
    <name type="common">Hyalostachybotrys bisbyi</name>
    <dbReference type="NCBI Taxonomy" id="80385"/>
    <lineage>
        <taxon>Eukaryota</taxon>
        <taxon>Fungi</taxon>
        <taxon>Dikarya</taxon>
        <taxon>Ascomycota</taxon>
        <taxon>Pezizomycotina</taxon>
        <taxon>Sordariomycetes</taxon>
        <taxon>Hypocreomycetidae</taxon>
        <taxon>Hypocreales</taxon>
        <taxon>Stachybotryaceae</taxon>
        <taxon>Stachybotrys</taxon>
    </lineage>
</organism>
<reference key="1">
    <citation type="journal article" date="2016" name="ChemBioChem">
        <title>Biosynthesis of LL-Z1272beta: discovery of a new member of NRPS-like enzymes for aryl-aldehyde formation.</title>
        <authorList>
            <person name="Li C."/>
            <person name="Matsuda Y."/>
            <person name="Gao H."/>
            <person name="Hu D."/>
            <person name="Yao X.S."/>
            <person name="Abe I."/>
        </authorList>
    </citation>
    <scope>NUCLEOTIDE SEQUENCE [GENOMIC DNA]</scope>
    <scope>DOMAIN</scope>
    <scope>FUNCTION</scope>
    <scope>CATALYTIC ACTIVITY</scope>
    <scope>PATHWAY</scope>
    <source>
        <strain>PYH05-7</strain>
    </source>
</reference>
<sequence>MGSLGSSQLKPFNKAPIDFVSTKRQPGAVCSLPELVDYNAQHNASHNFCIQGKPGGEFDTFTHADFKVAAANCAKWLKANLPLGASQAPNAITKNAPVALFMESDFGLVVHEFALLSLGIPPLVLSVRLPPNAIMHLLKSTGATSFIVSQKLSGPAKPALAALAANGIATAVGNPYTSFLEPGVDVASKGTFEVPENPDDITLLLHSSGTTGLPKPIPISHRMLMFAVSTAKFDTEDEAQGLNVSSLPLFHGFGLVAPGISMTVGKTTVYPASDGIPNIVSIIDLIKRTNARSLMTVPFLLDDVINNEEGLRVLAGLDFVGTGGAALGPGVGDKLAAAGIKLLNFYGTTESGPLSLVFVPKDNYNWKFFRLRTDMNFEIANLEPKDGVKRYRLTIRAFGEGEDQEIADQLIRNDEYPETDFAAVGRDDDVIVLATGEKASPQILENMLTEAPMVKAAIAFGENQFNLGVIVEPKEPLAEGGEAAFKELIWPIIVAAGQKMDAHSVIPSQEAVIVVPNGVRVPRTDKGSIARKEVYALFADAMKDVYEKLARAVGGADLKPLDLETLEEDIKALIIEHSGLKVPAEGLSAEESLFDFGLDSLQALKLRRVLAAAANKSEAMKDVNVDKVIPPEFVYLNPSVAQMAAAIKNPSAGSAAPTVDANAYKGVEKFAEQYALPGASAEEKAPSVRERAIVVVTGSSGSLGSHVVATLARDPKVMRVVVMVRQGSKPFDREPWTSRGINLKEDEFAKIVPLPVDPTAENLGVDPMMYGMLQNNLTHIVHAAWPMNYLTTLPSFQYQFEYLSGLLKLATSGNTANKRRFIFVSSIAAVARLSLSNSGAMISETPVEPVDAACGIGYADGKLVCEKILEKAAVSHAGQLEIAYVRCGQMTGSRATGAWNADEQIPMIFRTAKNLGVLPRIPGTLSWIPVDDAAQYIMDLSFFEGALPIASHLENPVRQSWADLMDGAGKFLGIQKSVSWPEWLELAGAAEDGPQDKYPVKKLFAFFKFSFGPMASGAVILGTDVARAHSATIKNMGALDASTIMKYFLHWQKINYL</sequence>
<feature type="chain" id="PRO_0000450380" description="Adenylate-forming reductase stbB">
    <location>
        <begin position="1"/>
        <end position="1057"/>
    </location>
</feature>
<feature type="domain" description="Carrier" evidence="3 7">
    <location>
        <begin position="564"/>
        <end position="651"/>
    </location>
</feature>
<feature type="region of interest" description="Adenylation (A) domain" evidence="2 7">
    <location>
        <begin position="21"/>
        <end position="378"/>
    </location>
</feature>
<feature type="region of interest" description="Reductase (R) domain" evidence="2 7">
    <location>
        <begin position="693"/>
        <end position="1025"/>
    </location>
</feature>
<feature type="binding site" evidence="1">
    <location>
        <position position="251"/>
    </location>
    <ligand>
        <name>AMP</name>
        <dbReference type="ChEBI" id="CHEBI:456215"/>
    </ligand>
</feature>
<feature type="binding site" evidence="1">
    <location>
        <begin position="344"/>
        <end position="345"/>
    </location>
    <ligand>
        <name>AMP</name>
        <dbReference type="ChEBI" id="CHEBI:456215"/>
    </ligand>
</feature>
<feature type="binding site" evidence="1">
    <location>
        <position position="349"/>
    </location>
    <ligand>
        <name>AMP</name>
        <dbReference type="ChEBI" id="CHEBI:456215"/>
    </ligand>
</feature>
<feature type="binding site" evidence="1">
    <location>
        <begin position="423"/>
        <end position="426"/>
    </location>
    <ligand>
        <name>AMP</name>
        <dbReference type="ChEBI" id="CHEBI:456215"/>
    </ligand>
</feature>
<feature type="binding site" evidence="1">
    <location>
        <begin position="700"/>
        <end position="703"/>
    </location>
    <ligand>
        <name>NADP(+)</name>
        <dbReference type="ChEBI" id="CHEBI:58349"/>
    </ligand>
</feature>
<feature type="binding site" evidence="1">
    <location>
        <begin position="783"/>
        <end position="785"/>
    </location>
    <ligand>
        <name>NADP(+)</name>
        <dbReference type="ChEBI" id="CHEBI:58349"/>
    </ligand>
</feature>
<feature type="binding site" evidence="1">
    <location>
        <position position="858"/>
    </location>
    <ligand>
        <name>NADP(+)</name>
        <dbReference type="ChEBI" id="CHEBI:58349"/>
    </ligand>
</feature>
<feature type="binding site" evidence="1">
    <location>
        <position position="862"/>
    </location>
    <ligand>
        <name>NADP(+)</name>
        <dbReference type="ChEBI" id="CHEBI:58349"/>
    </ligand>
</feature>
<feature type="modified residue" description="O-(pantetheine 4'-phosphoryl)serine" evidence="3">
    <location>
        <position position="600"/>
    </location>
</feature>
<comment type="function">
    <text evidence="4">Nonribosomal peptide synthase-like protein; part of the cluster that mediates the biosynthesis of LL-Z1272-beta, also known as ilicicolin B, a prenylated aryl-aldehyde produced by several fungi and that serves as a key pathway intermediate for many fungal meroterpenoids (PubMed:26972702). The first step in the pathway is performed by the non-reducing polyketide synthase stbA that produces orsellinic acid by condensing acetyl-CoA with 3 malonyl-CoA units (PubMed:26972702). The prenyltransferase stbC then prenylates orsenilic acid into grifolic acid (PubMed:26972702). Finally, grifolic acid is reduced to ilicicolin B by the NRPS-like protein stbB (PubMed:26972702).</text>
</comment>
<comment type="catalytic activity">
    <reaction evidence="4">
        <text>ilicicolinate B + AH2 + ATP = ilicicolin B + A + AMP + diphosphate</text>
        <dbReference type="Rhea" id="RHEA:63080"/>
        <dbReference type="ChEBI" id="CHEBI:13193"/>
        <dbReference type="ChEBI" id="CHEBI:17499"/>
        <dbReference type="ChEBI" id="CHEBI:30616"/>
        <dbReference type="ChEBI" id="CHEBI:33019"/>
        <dbReference type="ChEBI" id="CHEBI:146152"/>
        <dbReference type="ChEBI" id="CHEBI:146153"/>
        <dbReference type="ChEBI" id="CHEBI:456215"/>
    </reaction>
    <physiologicalReaction direction="left-to-right" evidence="4">
        <dbReference type="Rhea" id="RHEA:63081"/>
    </physiologicalReaction>
</comment>
<comment type="pathway">
    <text evidence="4">Secondary metabolite biosynthesis; terpenoid biosynthesis.</text>
</comment>
<comment type="domain">
    <text evidence="7">Contains three distinct domains: an adenylation (A) domain that activates the substrate amino acid which is subsequently covalently linked as a thioester (aminoacyl-S-PCP) to the 4'-phosphopantetheine prosthetic group of the second domain, the peptidyl carrier protein (PCP) domain, as well as a reductase (R) release domain.</text>
</comment>
<comment type="similarity">
    <text evidence="6">Belongs to the adenylate-forming reductase family.</text>
</comment>
<name>STBB_STABI</name>
<accession>A0A193PS46</accession>
<evidence type="ECO:0000250" key="1">
    <source>
        <dbReference type="UniProtKB" id="Q6RKB1"/>
    </source>
</evidence>
<evidence type="ECO:0000255" key="2"/>
<evidence type="ECO:0000255" key="3">
    <source>
        <dbReference type="PROSITE-ProRule" id="PRU00258"/>
    </source>
</evidence>
<evidence type="ECO:0000269" key="4">
    <source>
    </source>
</evidence>
<evidence type="ECO:0000303" key="5">
    <source>
    </source>
</evidence>
<evidence type="ECO:0000305" key="6"/>
<evidence type="ECO:0000305" key="7">
    <source>
    </source>
</evidence>
<keyword id="KW-0067">ATP-binding</keyword>
<keyword id="KW-0521">NADP</keyword>
<keyword id="KW-0547">Nucleotide-binding</keyword>
<keyword id="KW-0560">Oxidoreductase</keyword>
<keyword id="KW-0596">Phosphopantetheine</keyword>
<keyword id="KW-0597">Phosphoprotein</keyword>
<proteinExistence type="evidence at protein level"/>
<gene>
    <name evidence="5" type="primary">stbB</name>
</gene>
<dbReference type="EC" id="1.2.1.-" evidence="4"/>
<dbReference type="EMBL" id="LC125467">
    <property type="protein sequence ID" value="BAV19380.1"/>
    <property type="molecule type" value="Genomic_DNA"/>
</dbReference>
<dbReference type="SMR" id="A0A193PS46"/>
<dbReference type="UniPathway" id="UPA00213"/>
<dbReference type="GO" id="GO:0005524">
    <property type="term" value="F:ATP binding"/>
    <property type="evidence" value="ECO:0007669"/>
    <property type="project" value="UniProtKB-KW"/>
</dbReference>
<dbReference type="GO" id="GO:0016491">
    <property type="term" value="F:oxidoreductase activity"/>
    <property type="evidence" value="ECO:0007669"/>
    <property type="project" value="UniProtKB-KW"/>
</dbReference>
<dbReference type="GO" id="GO:0016114">
    <property type="term" value="P:terpenoid biosynthetic process"/>
    <property type="evidence" value="ECO:0007669"/>
    <property type="project" value="UniProtKB-UniPathway"/>
</dbReference>
<dbReference type="Gene3D" id="1.10.1200.10">
    <property type="entry name" value="ACP-like"/>
    <property type="match status" value="1"/>
</dbReference>
<dbReference type="Gene3D" id="3.40.50.12780">
    <property type="entry name" value="N-terminal domain of ligase-like"/>
    <property type="match status" value="1"/>
</dbReference>
<dbReference type="Gene3D" id="3.40.50.720">
    <property type="entry name" value="NAD(P)-binding Rossmann-like Domain"/>
    <property type="match status" value="1"/>
</dbReference>
<dbReference type="InterPro" id="IPR036736">
    <property type="entry name" value="ACP-like_sf"/>
</dbReference>
<dbReference type="InterPro" id="IPR051414">
    <property type="entry name" value="Adenylate-forming_Reductase"/>
</dbReference>
<dbReference type="InterPro" id="IPR020845">
    <property type="entry name" value="AMP-binding_CS"/>
</dbReference>
<dbReference type="InterPro" id="IPR000873">
    <property type="entry name" value="AMP-dep_synth/lig_dom"/>
</dbReference>
<dbReference type="InterPro" id="IPR042099">
    <property type="entry name" value="ANL_N_sf"/>
</dbReference>
<dbReference type="InterPro" id="IPR013120">
    <property type="entry name" value="Far_NAD-bd"/>
</dbReference>
<dbReference type="InterPro" id="IPR036291">
    <property type="entry name" value="NAD(P)-bd_dom_sf"/>
</dbReference>
<dbReference type="InterPro" id="IPR009081">
    <property type="entry name" value="PP-bd_ACP"/>
</dbReference>
<dbReference type="PANTHER" id="PTHR43439:SF2">
    <property type="entry name" value="ENZYME, PUTATIVE (JCVI)-RELATED"/>
    <property type="match status" value="1"/>
</dbReference>
<dbReference type="PANTHER" id="PTHR43439">
    <property type="entry name" value="PHENYLACETATE-COENZYME A LIGASE"/>
    <property type="match status" value="1"/>
</dbReference>
<dbReference type="Pfam" id="PF00501">
    <property type="entry name" value="AMP-binding"/>
    <property type="match status" value="1"/>
</dbReference>
<dbReference type="Pfam" id="PF23562">
    <property type="entry name" value="AMP-binding_C_3"/>
    <property type="match status" value="1"/>
</dbReference>
<dbReference type="Pfam" id="PF07993">
    <property type="entry name" value="NAD_binding_4"/>
    <property type="match status" value="1"/>
</dbReference>
<dbReference type="Pfam" id="PF00550">
    <property type="entry name" value="PP-binding"/>
    <property type="match status" value="1"/>
</dbReference>
<dbReference type="SUPFAM" id="SSF56801">
    <property type="entry name" value="Acetyl-CoA synthetase-like"/>
    <property type="match status" value="1"/>
</dbReference>
<dbReference type="SUPFAM" id="SSF47336">
    <property type="entry name" value="ACP-like"/>
    <property type="match status" value="1"/>
</dbReference>
<dbReference type="SUPFAM" id="SSF51735">
    <property type="entry name" value="NAD(P)-binding Rossmann-fold domains"/>
    <property type="match status" value="1"/>
</dbReference>
<dbReference type="PROSITE" id="PS00455">
    <property type="entry name" value="AMP_BINDING"/>
    <property type="match status" value="1"/>
</dbReference>
<dbReference type="PROSITE" id="PS50075">
    <property type="entry name" value="CARRIER"/>
    <property type="match status" value="1"/>
</dbReference>